<gene>
    <name evidence="7" type="primary">yap1</name>
    <name type="ORF">AFLA_129340</name>
</gene>
<comment type="function">
    <text evidence="2 6">Transcription activator involved in oxidative stress response and redox homeostasis (By similarity). Regulates the transcription of genes encoding antioxidant enzymes and components of the cellular thiol-reducing pathways (By similarity). May be involved in antifungal resistance to voriconazole (PubMed:30126960).</text>
</comment>
<comment type="subcellular location">
    <subcellularLocation>
        <location evidence="2">Nucleus</location>
    </subcellularLocation>
    <subcellularLocation>
        <location evidence="2">Cytoplasm</location>
    </subcellularLocation>
    <text evidence="2">The nuclear localization is oxidative stress-dependent and oxidized yap1 is found predominantly in the nucleus, while reduced yap1 is continuously exported to the cytoplasm.</text>
</comment>
<comment type="domain">
    <text evidence="1">Contains two cysteine rich domains (CRD), referred to as the N- and C-terminal CRD's, n-CRD and c-CRD, respectively. A nuclear export signal is embedded in the c-CRD, with which the nuclear export proteins interact only in the absence of disulfide bonds (or otherwise oxidized cysteines) within the c-CRD or between the c-CRD and the n-CRD.</text>
</comment>
<comment type="PTM">
    <text evidence="1">Depending on the oxidative stress inducing agent, yap1 can undergo two distinct conformational changes, both involving disulfide bond formation, and both masking the nuclear export signal, thus abolishing nuclear export.</text>
</comment>
<comment type="similarity">
    <text evidence="8">Belongs to the bZIP family. YAP subfamily.</text>
</comment>
<dbReference type="EMBL" id="EQ963481">
    <property type="protein sequence ID" value="EED48711.1"/>
    <property type="molecule type" value="Genomic_DNA"/>
</dbReference>
<dbReference type="RefSeq" id="XP_002382127.1">
    <property type="nucleotide sequence ID" value="XM_002382086.1"/>
</dbReference>
<dbReference type="SMR" id="B8NNN3"/>
<dbReference type="STRING" id="332952.B8NNN3"/>
<dbReference type="EnsemblFungi" id="EED48711">
    <property type="protein sequence ID" value="EED48711"/>
    <property type="gene ID" value="AFLA_129340"/>
</dbReference>
<dbReference type="VEuPathDB" id="FungiDB:AFLA_012763"/>
<dbReference type="eggNOG" id="ENOG502RPD7">
    <property type="taxonomic scope" value="Eukaryota"/>
</dbReference>
<dbReference type="HOGENOM" id="CLU_011807_0_0_1"/>
<dbReference type="OMA" id="LNMACGN"/>
<dbReference type="PHI-base" id="PHI:123095"/>
<dbReference type="GO" id="GO:0005737">
    <property type="term" value="C:cytoplasm"/>
    <property type="evidence" value="ECO:0007669"/>
    <property type="project" value="UniProtKB-SubCell"/>
</dbReference>
<dbReference type="GO" id="GO:0090575">
    <property type="term" value="C:RNA polymerase II transcription regulator complex"/>
    <property type="evidence" value="ECO:0007669"/>
    <property type="project" value="TreeGrafter"/>
</dbReference>
<dbReference type="GO" id="GO:0001228">
    <property type="term" value="F:DNA-binding transcription activator activity, RNA polymerase II-specific"/>
    <property type="evidence" value="ECO:0007669"/>
    <property type="project" value="TreeGrafter"/>
</dbReference>
<dbReference type="GO" id="GO:0000976">
    <property type="term" value="F:transcription cis-regulatory region binding"/>
    <property type="evidence" value="ECO:0007669"/>
    <property type="project" value="InterPro"/>
</dbReference>
<dbReference type="GO" id="GO:0033554">
    <property type="term" value="P:cellular response to stress"/>
    <property type="evidence" value="ECO:0007669"/>
    <property type="project" value="UniProtKB-ARBA"/>
</dbReference>
<dbReference type="CDD" id="cd14688">
    <property type="entry name" value="bZIP_YAP"/>
    <property type="match status" value="1"/>
</dbReference>
<dbReference type="FunFam" id="1.20.5.170:FF:000067">
    <property type="entry name" value="BZIP transcription factor"/>
    <property type="match status" value="1"/>
</dbReference>
<dbReference type="FunFam" id="1.10.238.100:FF:000001">
    <property type="entry name" value="BZIP transcription factor (AP-1)"/>
    <property type="match status" value="1"/>
</dbReference>
<dbReference type="Gene3D" id="1.20.5.170">
    <property type="match status" value="1"/>
</dbReference>
<dbReference type="Gene3D" id="1.10.238.100">
    <property type="entry name" value="YAP1 redox domain. Chain B"/>
    <property type="match status" value="1"/>
</dbReference>
<dbReference type="InterPro" id="IPR050936">
    <property type="entry name" value="AP-1-like"/>
</dbReference>
<dbReference type="InterPro" id="IPR004827">
    <property type="entry name" value="bZIP"/>
</dbReference>
<dbReference type="InterPro" id="IPR046347">
    <property type="entry name" value="bZIP_sf"/>
</dbReference>
<dbReference type="InterPro" id="IPR013910">
    <property type="entry name" value="TF_PAP1"/>
</dbReference>
<dbReference type="InterPro" id="IPR023167">
    <property type="entry name" value="Yap1_redox_dom_sf"/>
</dbReference>
<dbReference type="PANTHER" id="PTHR40621:SF6">
    <property type="entry name" value="AP-1-LIKE TRANSCRIPTION FACTOR YAP1-RELATED"/>
    <property type="match status" value="1"/>
</dbReference>
<dbReference type="PANTHER" id="PTHR40621">
    <property type="entry name" value="TRANSCRIPTION FACTOR KAPC-RELATED"/>
    <property type="match status" value="1"/>
</dbReference>
<dbReference type="Pfam" id="PF00170">
    <property type="entry name" value="bZIP_1"/>
    <property type="match status" value="1"/>
</dbReference>
<dbReference type="Pfam" id="PF08601">
    <property type="entry name" value="PAP1"/>
    <property type="match status" value="2"/>
</dbReference>
<dbReference type="SMART" id="SM00338">
    <property type="entry name" value="BRLZ"/>
    <property type="match status" value="1"/>
</dbReference>
<dbReference type="SUPFAM" id="SSF57959">
    <property type="entry name" value="Leucine zipper domain"/>
    <property type="match status" value="1"/>
</dbReference>
<dbReference type="SUPFAM" id="SSF111430">
    <property type="entry name" value="YAP1 redox domain"/>
    <property type="match status" value="1"/>
</dbReference>
<dbReference type="PROSITE" id="PS50217">
    <property type="entry name" value="BZIP"/>
    <property type="match status" value="1"/>
</dbReference>
<dbReference type="PROSITE" id="PS00036">
    <property type="entry name" value="BZIP_BASIC"/>
    <property type="match status" value="1"/>
</dbReference>
<organism>
    <name type="scientific">Aspergillus flavus (strain ATCC 200026 / FGSC A1120 / IAM 13836 / NRRL 3357 / JCM 12722 / SRRC 167)</name>
    <dbReference type="NCBI Taxonomy" id="332952"/>
    <lineage>
        <taxon>Eukaryota</taxon>
        <taxon>Fungi</taxon>
        <taxon>Dikarya</taxon>
        <taxon>Ascomycota</taxon>
        <taxon>Pezizomycotina</taxon>
        <taxon>Eurotiomycetes</taxon>
        <taxon>Eurotiomycetidae</taxon>
        <taxon>Eurotiales</taxon>
        <taxon>Aspergillaceae</taxon>
        <taxon>Aspergillus</taxon>
        <taxon>Aspergillus subgen. Circumdati</taxon>
    </lineage>
</organism>
<reference key="1">
    <citation type="journal article" date="2015" name="Genome Announc.">
        <title>Genome sequence of Aspergillus flavus NRRL 3357, a strain that causes aflatoxin contamination of food and feed.</title>
        <authorList>
            <person name="Nierman W.C."/>
            <person name="Yu J."/>
            <person name="Fedorova-Abrams N.D."/>
            <person name="Losada L."/>
            <person name="Cleveland T.E."/>
            <person name="Bhatnagar D."/>
            <person name="Bennett J.W."/>
            <person name="Dean R."/>
            <person name="Payne G.A."/>
        </authorList>
    </citation>
    <scope>NUCLEOTIDE SEQUENCE [LARGE SCALE GENOMIC DNA]</scope>
    <source>
        <strain>ATCC 200026 / FGSC A1120 / IAM 13836 / NRRL 3357 / JCM 12722 / SRRC 167</strain>
    </source>
</reference>
<reference key="2">
    <citation type="journal article" date="2018" name="Antimicrob. Agents Chemother.">
        <title>Contributions of yap1 mutation and subsequent atrF upregulation to voriconazole resistance in Aspergillus flavus.</title>
        <authorList>
            <person name="Ukai Y."/>
            <person name="Kuroiwa M."/>
            <person name="Kurihara N."/>
            <person name="Naruse H."/>
            <person name="Homma T."/>
            <person name="Maki H."/>
            <person name="Naito A."/>
        </authorList>
    </citation>
    <scope>FUNCTION</scope>
    <scope>MUTAGENESIS OF LEU-558</scope>
</reference>
<name>AP1_ASPFN</name>
<evidence type="ECO:0000250" key="1">
    <source>
        <dbReference type="UniProtKB" id="P19880"/>
    </source>
</evidence>
<evidence type="ECO:0000250" key="2">
    <source>
        <dbReference type="UniProtKB" id="Q4WMH0"/>
    </source>
</evidence>
<evidence type="ECO:0000255" key="3">
    <source>
        <dbReference type="PROSITE-ProRule" id="PRU00768"/>
    </source>
</evidence>
<evidence type="ECO:0000255" key="4">
    <source>
        <dbReference type="PROSITE-ProRule" id="PRU00978"/>
    </source>
</evidence>
<evidence type="ECO:0000256" key="5">
    <source>
        <dbReference type="SAM" id="MobiDB-lite"/>
    </source>
</evidence>
<evidence type="ECO:0000269" key="6">
    <source>
    </source>
</evidence>
<evidence type="ECO:0000303" key="7">
    <source>
    </source>
</evidence>
<evidence type="ECO:0000305" key="8"/>
<protein>
    <recommendedName>
        <fullName evidence="7">AP-1-like transcription factor yap1</fullName>
    </recommendedName>
    <alternativeName>
        <fullName evidence="7">BZIP domain-containing transcription factor yap1</fullName>
    </alternativeName>
</protein>
<accession>B8NNN3</accession>
<keyword id="KW-0963">Cytoplasm</keyword>
<keyword id="KW-1015">Disulfide bond</keyword>
<keyword id="KW-0238">DNA-binding</keyword>
<keyword id="KW-0539">Nucleus</keyword>
<keyword id="KW-0804">Transcription</keyword>
<keyword id="KW-0805">Transcription regulation</keyword>
<sequence length="584" mass="63771">MADYNTLYHQGLYLSPDQQDLLLAALSSNQPPQKQQNDKQRSQAKTDPDSTPGNMSSGSFSMSPGFNKTHPGSGGLGYGDDESPFLDFNPELDFDFPGSENLIGDLPGSLPSEEHEVGEKRKDMSDNENEESGKKRRESDDKAAKKPGRKPLTSEPTSKRKAQNRAAQRAFRERKEKHLKDLETKVDELQKASDDANQENGLLRAQVERLQVELREYRKRLSWLTTGSGISAMSAIPSAHSRNLYGLNNNDFMFDFPKFGDLPGGHIFNGPLTKSNQNKPRDGSSPATSDSQVPGVMTRETLNGSNNRGMPTAKAANGVSNNPSPKVPSVYNIRQSASSHDSSNSCSPSSSSDSHQSQMLSSNGTSPEPSSNSPATKLNDSVQNHHACTYSTIDGEASFCAQLGMACGNINNPIPAVRGKSESVSNTPSQPNNNYEQTPGPGLDLLAQQNGGQFDPVLFGDWREPQDAILSQDFGTFFDDAFPLPDLGSPSHNFNEVANPQPPKKDLIAEIDNKLDEEVVPGEDKSQMLSCTKIWDRLQSMEKFRNGEIDVDNLCSELRTKARCSEGGVVVNQKDVEDIMGRVK</sequence>
<proteinExistence type="evidence at protein level"/>
<feature type="chain" id="PRO_0000449500" description="AP-1-like transcription factor yap1">
    <location>
        <begin position="1"/>
        <end position="584"/>
    </location>
</feature>
<feature type="domain" description="bZIP" evidence="4">
    <location>
        <begin position="154"/>
        <end position="217"/>
    </location>
</feature>
<feature type="region of interest" description="Disordered" evidence="5">
    <location>
        <begin position="23"/>
        <end position="179"/>
    </location>
</feature>
<feature type="region of interest" description="Basic motif" evidence="4">
    <location>
        <begin position="159"/>
        <end position="180"/>
    </location>
</feature>
<feature type="region of interest" description="Leucine-zipper" evidence="4">
    <location>
        <begin position="182"/>
        <end position="189"/>
    </location>
</feature>
<feature type="region of interest" description="Transcription activation 1" evidence="1">
    <location>
        <begin position="211"/>
        <end position="332"/>
    </location>
</feature>
<feature type="region of interest" description="Disordered" evidence="5">
    <location>
        <begin position="267"/>
        <end position="379"/>
    </location>
</feature>
<feature type="region of interest" description="n-CRD" evidence="1">
    <location>
        <begin position="284"/>
        <end position="296"/>
    </location>
</feature>
<feature type="region of interest" description="Transcription activation 2" evidence="1">
    <location>
        <begin position="377"/>
        <end position="480"/>
    </location>
</feature>
<feature type="region of interest" description="Disordered" evidence="5">
    <location>
        <begin position="418"/>
        <end position="441"/>
    </location>
</feature>
<feature type="region of interest" description="c-CRD" evidence="1">
    <location>
        <begin position="531"/>
        <end position="564"/>
    </location>
</feature>
<feature type="short sequence motif" description="Bipartite nuclear localization signal" evidence="3">
    <location>
        <begin position="35"/>
        <end position="42"/>
    </location>
</feature>
<feature type="short sequence motif" description="Bipartite nuclear localization signal" evidence="3">
    <location>
        <begin position="68"/>
        <end position="75"/>
    </location>
</feature>
<feature type="short sequence motif" description="Nuclear export signal" evidence="1">
    <location>
        <begin position="549"/>
        <end position="556"/>
    </location>
</feature>
<feature type="compositionally biased region" description="Basic and acidic residues" evidence="5">
    <location>
        <begin position="36"/>
        <end position="48"/>
    </location>
</feature>
<feature type="compositionally biased region" description="Low complexity" evidence="5">
    <location>
        <begin position="52"/>
        <end position="67"/>
    </location>
</feature>
<feature type="compositionally biased region" description="Acidic residues" evidence="5">
    <location>
        <begin position="79"/>
        <end position="94"/>
    </location>
</feature>
<feature type="compositionally biased region" description="Basic and acidic residues" evidence="5">
    <location>
        <begin position="112"/>
        <end position="144"/>
    </location>
</feature>
<feature type="compositionally biased region" description="Basic and acidic residues" evidence="5">
    <location>
        <begin position="170"/>
        <end position="179"/>
    </location>
</feature>
<feature type="compositionally biased region" description="Polar residues" evidence="5">
    <location>
        <begin position="300"/>
        <end position="309"/>
    </location>
</feature>
<feature type="compositionally biased region" description="Low complexity" evidence="5">
    <location>
        <begin position="336"/>
        <end position="362"/>
    </location>
</feature>
<feature type="compositionally biased region" description="Polar residues" evidence="5">
    <location>
        <begin position="363"/>
        <end position="379"/>
    </location>
</feature>
<feature type="compositionally biased region" description="Polar residues" evidence="5">
    <location>
        <begin position="422"/>
        <end position="437"/>
    </location>
</feature>
<feature type="disulfide bond" description="In nuclear retained form; alternate" evidence="1">
    <location>
        <begin position="531"/>
        <end position="564"/>
    </location>
</feature>
<feature type="disulfide bond" description="In nuclear retained form; alternate" evidence="1">
    <location>
        <begin position="531"/>
        <end position="555"/>
    </location>
</feature>
<feature type="disulfide bond" description="In nuclear retained form; alternate" evidence="1">
    <location>
        <begin position="555"/>
        <end position="564"/>
    </location>
</feature>
<feature type="mutagenesis site" description="Leads to the up-regulation of the expression of atrF and subsequent resistance to voriconazole." evidence="6">
    <original>L</original>
    <variation>W</variation>
    <location>
        <position position="558"/>
    </location>
</feature>